<keyword id="KW-1185">Reference proteome</keyword>
<organismHost>
    <name type="scientific">Orgyia pseudotsugata</name>
    <name type="common">Douglas-fir tussock moth</name>
    <dbReference type="NCBI Taxonomy" id="33414"/>
</organismHost>
<protein>
    <recommendedName>
        <fullName>P18 protein</fullName>
    </recommendedName>
</protein>
<proteinExistence type="predicted"/>
<gene>
    <name type="primary">P18</name>
    <name type="ORF">ORF94</name>
</gene>
<reference key="1">
    <citation type="journal article" date="1993" name="Virology">
        <title>A 25-kDa protein is associated with the envelopes of occluded baculovirus virions.</title>
        <authorList>
            <person name="Russell R.L.Q."/>
            <person name="Rohrmann G.F."/>
        </authorList>
    </citation>
    <scope>NUCLEOTIDE SEQUENCE [GENOMIC DNA]</scope>
</reference>
<reference key="2">
    <citation type="journal article" date="1997" name="Virology">
        <title>The sequence of the Orgyia pseudotsugata multinucleocapsid nuclear polyhedrosis virus genome.</title>
        <authorList>
            <person name="Ahrens C.H."/>
            <person name="Russell R.R."/>
            <person name="Funk C.J."/>
            <person name="Evans J."/>
            <person name="Harwood S."/>
            <person name="Rohrmann G.F."/>
        </authorList>
    </citation>
    <scope>NUCLEOTIDE SEQUENCE [LARGE SCALE GENOMIC DNA]</scope>
</reference>
<accession>Q06905</accession>
<organism>
    <name type="scientific">Orgyia pseudotsugata multicapsid polyhedrosis virus</name>
    <name type="common">OpMNPV</name>
    <dbReference type="NCBI Taxonomy" id="262177"/>
    <lineage>
        <taxon>Viruses</taxon>
        <taxon>Viruses incertae sedis</taxon>
        <taxon>Naldaviricetes</taxon>
        <taxon>Lefavirales</taxon>
        <taxon>Baculoviridae</taxon>
        <taxon>Alphabaculovirus</taxon>
        <taxon>Alphabaculovirus orpseudotsugatae</taxon>
    </lineage>
</organism>
<dbReference type="EMBL" id="D13768">
    <property type="protein sequence ID" value="BAA02912.1"/>
    <property type="molecule type" value="Genomic_DNA"/>
</dbReference>
<dbReference type="EMBL" id="U75930">
    <property type="protein sequence ID" value="AAC59093.1"/>
    <property type="molecule type" value="Genomic_DNA"/>
</dbReference>
<dbReference type="RefSeq" id="NP_046250.1">
    <property type="nucleotide sequence ID" value="NC_001875.2"/>
</dbReference>
<dbReference type="KEGG" id="vg:912064"/>
<dbReference type="OrthoDB" id="11558at10239"/>
<dbReference type="Proteomes" id="UP000009248">
    <property type="component" value="Genome"/>
</dbReference>
<dbReference type="InterPro" id="IPR007773">
    <property type="entry name" value="AcMNPV_P18"/>
</dbReference>
<dbReference type="Pfam" id="PF05081">
    <property type="entry name" value="AcMNPV_P18"/>
    <property type="match status" value="1"/>
</dbReference>
<feature type="chain" id="PRO_0000132889" description="P18 protein">
    <location>
        <begin position="1"/>
        <end position="159"/>
    </location>
</feature>
<name>VP18_NPVOP</name>
<sequence length="159" mass="17811">MAVKEVRLYLCPVPPSVALSVGDADADEPMIYFENITECLTDASCDKLACFAELKQEQALFMKKLYKHMVLKSDGAYNKHHVLFDLMVMYKTYVQLADESAFGSNVLHYCEQFITGAFEVFGLGSRVAVLVPPGWENDNLSVLLKHLHGLHLIAIDIVQ</sequence>